<feature type="chain" id="PRO_1000064249" description="Protein TsgA">
    <location>
        <begin position="1"/>
        <end position="393"/>
    </location>
</feature>
<feature type="transmembrane region" description="Helical" evidence="1">
    <location>
        <begin position="11"/>
        <end position="31"/>
    </location>
</feature>
<feature type="transmembrane region" description="Helical" evidence="1">
    <location>
        <begin position="51"/>
        <end position="71"/>
    </location>
</feature>
<feature type="transmembrane region" description="Helical" evidence="1">
    <location>
        <begin position="78"/>
        <end position="98"/>
    </location>
</feature>
<feature type="transmembrane region" description="Helical" evidence="1">
    <location>
        <begin position="101"/>
        <end position="121"/>
    </location>
</feature>
<feature type="transmembrane region" description="Helical" evidence="1">
    <location>
        <begin position="134"/>
        <end position="154"/>
    </location>
</feature>
<feature type="transmembrane region" description="Helical" evidence="1">
    <location>
        <begin position="162"/>
        <end position="182"/>
    </location>
</feature>
<feature type="transmembrane region" description="Helical" evidence="1">
    <location>
        <begin position="206"/>
        <end position="226"/>
    </location>
</feature>
<feature type="transmembrane region" description="Helical" evidence="1">
    <location>
        <begin position="245"/>
        <end position="265"/>
    </location>
</feature>
<feature type="transmembrane region" description="Helical" evidence="1">
    <location>
        <begin position="273"/>
        <end position="293"/>
    </location>
</feature>
<feature type="transmembrane region" description="Helical" evidence="1">
    <location>
        <begin position="297"/>
        <end position="317"/>
    </location>
</feature>
<feature type="transmembrane region" description="Helical" evidence="1">
    <location>
        <begin position="332"/>
        <end position="352"/>
    </location>
</feature>
<feature type="transmembrane region" description="Helical" evidence="1">
    <location>
        <begin position="361"/>
        <end position="381"/>
    </location>
</feature>
<reference key="1">
    <citation type="journal article" date="2006" name="Proc. Natl. Acad. Sci. U.S.A.">
        <title>Identification of genes subject to positive selection in uropathogenic strains of Escherichia coli: a comparative genomics approach.</title>
        <authorList>
            <person name="Chen S.L."/>
            <person name="Hung C.-S."/>
            <person name="Xu J."/>
            <person name="Reigstad C.S."/>
            <person name="Magrini V."/>
            <person name="Sabo A."/>
            <person name="Blasiar D."/>
            <person name="Bieri T."/>
            <person name="Meyer R.R."/>
            <person name="Ozersky P."/>
            <person name="Armstrong J.R."/>
            <person name="Fulton R.S."/>
            <person name="Latreille J.P."/>
            <person name="Spieth J."/>
            <person name="Hooton T.M."/>
            <person name="Mardis E.R."/>
            <person name="Hultgren S.J."/>
            <person name="Gordon J.I."/>
        </authorList>
    </citation>
    <scope>NUCLEOTIDE SEQUENCE [LARGE SCALE GENOMIC DNA]</scope>
    <source>
        <strain>UTI89 / UPEC</strain>
    </source>
</reference>
<organism>
    <name type="scientific">Escherichia coli (strain UTI89 / UPEC)</name>
    <dbReference type="NCBI Taxonomy" id="364106"/>
    <lineage>
        <taxon>Bacteria</taxon>
        <taxon>Pseudomonadati</taxon>
        <taxon>Pseudomonadota</taxon>
        <taxon>Gammaproteobacteria</taxon>
        <taxon>Enterobacterales</taxon>
        <taxon>Enterobacteriaceae</taxon>
        <taxon>Escherichia</taxon>
    </lineage>
</organism>
<proteinExistence type="inferred from homology"/>
<protein>
    <recommendedName>
        <fullName evidence="1">Protein TsgA</fullName>
    </recommendedName>
</protein>
<accession>Q1R5R8</accession>
<name>TSGA_ECOUT</name>
<dbReference type="EMBL" id="CP000243">
    <property type="protein sequence ID" value="ABE09296.1"/>
    <property type="molecule type" value="Genomic_DNA"/>
</dbReference>
<dbReference type="RefSeq" id="WP_000185247.1">
    <property type="nucleotide sequence ID" value="NZ_CP064825.1"/>
</dbReference>
<dbReference type="SMR" id="Q1R5R8"/>
<dbReference type="GeneID" id="75206308"/>
<dbReference type="KEGG" id="eci:UTI89_C3867"/>
<dbReference type="HOGENOM" id="CLU_056916_0_0_6"/>
<dbReference type="Proteomes" id="UP000001952">
    <property type="component" value="Chromosome"/>
</dbReference>
<dbReference type="GO" id="GO:0005886">
    <property type="term" value="C:plasma membrane"/>
    <property type="evidence" value="ECO:0007669"/>
    <property type="project" value="UniProtKB-SubCell"/>
</dbReference>
<dbReference type="GO" id="GO:0022857">
    <property type="term" value="F:transmembrane transporter activity"/>
    <property type="evidence" value="ECO:0007669"/>
    <property type="project" value="InterPro"/>
</dbReference>
<dbReference type="CDD" id="cd17333">
    <property type="entry name" value="MFS_FucP_MFSD4_like"/>
    <property type="match status" value="1"/>
</dbReference>
<dbReference type="FunFam" id="1.20.1250.20:FF:000032">
    <property type="entry name" value="Protein TsgA"/>
    <property type="match status" value="1"/>
</dbReference>
<dbReference type="FunFam" id="1.20.1250.20:FF:000052">
    <property type="entry name" value="Protein TsgA"/>
    <property type="match status" value="1"/>
</dbReference>
<dbReference type="Gene3D" id="1.20.1250.20">
    <property type="entry name" value="MFS general substrate transporter like domains"/>
    <property type="match status" value="2"/>
</dbReference>
<dbReference type="HAMAP" id="MF_01044">
    <property type="entry name" value="MFS_TsgA"/>
    <property type="match status" value="1"/>
</dbReference>
<dbReference type="InterPro" id="IPR011701">
    <property type="entry name" value="MFS"/>
</dbReference>
<dbReference type="InterPro" id="IPR020846">
    <property type="entry name" value="MFS_dom"/>
</dbReference>
<dbReference type="InterPro" id="IPR036259">
    <property type="entry name" value="MFS_trans_sf"/>
</dbReference>
<dbReference type="InterPro" id="IPR023528">
    <property type="entry name" value="MFS_TsgA"/>
</dbReference>
<dbReference type="InterPro" id="IPR050375">
    <property type="entry name" value="MFS_TsgA-like"/>
</dbReference>
<dbReference type="NCBIfam" id="NF002982">
    <property type="entry name" value="PRK03699.1"/>
    <property type="match status" value="1"/>
</dbReference>
<dbReference type="PANTHER" id="PTHR43702">
    <property type="entry name" value="L-FUCOSE-PROTON SYMPORTER"/>
    <property type="match status" value="1"/>
</dbReference>
<dbReference type="PANTHER" id="PTHR43702:SF3">
    <property type="entry name" value="PROTEIN TSGA"/>
    <property type="match status" value="1"/>
</dbReference>
<dbReference type="Pfam" id="PF07690">
    <property type="entry name" value="MFS_1"/>
    <property type="match status" value="1"/>
</dbReference>
<dbReference type="SUPFAM" id="SSF103473">
    <property type="entry name" value="MFS general substrate transporter"/>
    <property type="match status" value="1"/>
</dbReference>
<dbReference type="PROSITE" id="PS50850">
    <property type="entry name" value="MFS"/>
    <property type="match status" value="1"/>
</dbReference>
<comment type="subcellular location">
    <subcellularLocation>
        <location evidence="1">Cell inner membrane</location>
        <topology evidence="1">Multi-pass membrane protein</topology>
    </subcellularLocation>
</comment>
<comment type="similarity">
    <text evidence="1">Belongs to the major facilitator superfamily. TsgA family.</text>
</comment>
<gene>
    <name evidence="1" type="primary">tsgA</name>
    <name type="ordered locus">UTI89_C3867</name>
</gene>
<evidence type="ECO:0000255" key="1">
    <source>
        <dbReference type="HAMAP-Rule" id="MF_01044"/>
    </source>
</evidence>
<keyword id="KW-0997">Cell inner membrane</keyword>
<keyword id="KW-1003">Cell membrane</keyword>
<keyword id="KW-0472">Membrane</keyword>
<keyword id="KW-0812">Transmembrane</keyword>
<keyword id="KW-1133">Transmembrane helix</keyword>
<sequence>MTNSNRIKLTWISFLSYALTGALVIVTGMVMGNIADYFNLPVSSMSNTFTFLNAGILISIFLNAWLMEIVPLKTQLRFGFLLMVLAVAGLMFSHSLALFSAAMFILGVVSGITMSIGTFLVTQMYEGRQRGSRLLFTDSFFSMAGMIFPMIAAFLLARSIEWYWVYACIGLVYVAIFILTFGCEFPALGKHAPKTDAPVEKEKWGIGVLFLSVAALCYILGQLGFISWVPEYAKGLGMSLNDAGTLVSNFWMSYMVGMWAFSFILRFFDLQRILTVLAGLAAILMYVFNTGTPAHMAWSILALGFFSSAIYTTIITLGSQQTKVPSPKLVNFVLTCGTIGTMLTFVVTGPIVEHSGPQAALLTANGLYAVVFVMCFLLGFVSRHRQHNTLTSH</sequence>